<accession>Q48NZ8</accession>
<protein>
    <recommendedName>
        <fullName evidence="1">ATP phosphoribosyltransferase regulatory subunit</fullName>
    </recommendedName>
</protein>
<feature type="chain" id="PRO_0000242849" description="ATP phosphoribosyltransferase regulatory subunit">
    <location>
        <begin position="1"/>
        <end position="395"/>
    </location>
</feature>
<evidence type="ECO:0000255" key="1">
    <source>
        <dbReference type="HAMAP-Rule" id="MF_00125"/>
    </source>
</evidence>
<name>HISZ_PSE14</name>
<comment type="function">
    <text evidence="1">Required for the first step of histidine biosynthesis. May allow the feedback regulation of ATP phosphoribosyltransferase activity by histidine.</text>
</comment>
<comment type="pathway">
    <text evidence="1">Amino-acid biosynthesis; L-histidine biosynthesis; L-histidine from 5-phospho-alpha-D-ribose 1-diphosphate: step 1/9.</text>
</comment>
<comment type="subunit">
    <text evidence="1">Heteromultimer composed of HisG and HisZ subunits.</text>
</comment>
<comment type="subcellular location">
    <subcellularLocation>
        <location evidence="1">Cytoplasm</location>
    </subcellularLocation>
</comment>
<comment type="miscellaneous">
    <text>This function is generally fulfilled by the C-terminal part of HisG, which is missing in some bacteria such as this one.</text>
</comment>
<comment type="similarity">
    <text evidence="1">Belongs to the class-II aminoacyl-tRNA synthetase family. HisZ subfamily.</text>
</comment>
<reference key="1">
    <citation type="journal article" date="2005" name="J. Bacteriol.">
        <title>Whole-genome sequence analysis of Pseudomonas syringae pv. phaseolicola 1448A reveals divergence among pathovars in genes involved in virulence and transposition.</title>
        <authorList>
            <person name="Joardar V."/>
            <person name="Lindeberg M."/>
            <person name="Jackson R.W."/>
            <person name="Selengut J."/>
            <person name="Dodson R."/>
            <person name="Brinkac L.M."/>
            <person name="Daugherty S.C."/>
            <person name="DeBoy R.T."/>
            <person name="Durkin A.S."/>
            <person name="Gwinn Giglio M."/>
            <person name="Madupu R."/>
            <person name="Nelson W.C."/>
            <person name="Rosovitz M.J."/>
            <person name="Sullivan S.A."/>
            <person name="Crabtree J."/>
            <person name="Creasy T."/>
            <person name="Davidsen T.M."/>
            <person name="Haft D.H."/>
            <person name="Zafar N."/>
            <person name="Zhou L."/>
            <person name="Halpin R."/>
            <person name="Holley T."/>
            <person name="Khouri H.M."/>
            <person name="Feldblyum T.V."/>
            <person name="White O."/>
            <person name="Fraser C.M."/>
            <person name="Chatterjee A.K."/>
            <person name="Cartinhour S."/>
            <person name="Schneider D."/>
            <person name="Mansfield J.W."/>
            <person name="Collmer A."/>
            <person name="Buell R."/>
        </authorList>
    </citation>
    <scope>NUCLEOTIDE SEQUENCE [LARGE SCALE GENOMIC DNA]</scope>
    <source>
        <strain>1448A / Race 6</strain>
    </source>
</reference>
<organism>
    <name type="scientific">Pseudomonas savastanoi pv. phaseolicola (strain 1448A / Race 6)</name>
    <name type="common">Pseudomonas syringae pv. phaseolicola (strain 1448A / Race 6)</name>
    <dbReference type="NCBI Taxonomy" id="264730"/>
    <lineage>
        <taxon>Bacteria</taxon>
        <taxon>Pseudomonadati</taxon>
        <taxon>Pseudomonadota</taxon>
        <taxon>Gammaproteobacteria</taxon>
        <taxon>Pseudomonadales</taxon>
        <taxon>Pseudomonadaceae</taxon>
        <taxon>Pseudomonas</taxon>
    </lineage>
</organism>
<sequence>MATVDRWLLPDGIEEVLPPEAACIEVARRQVLDLFQSWGYEFVVTPHIEYLESLLTGAGSDLDLRTFKVIDPQSGRQMGFRADITPQVARIDAHTLKREGPSRLCYAGSVLHAQPRALSSSRSPIQLGAELYGDASPSSDVEVISLMLAMLQLADVPDVHMDLGHVGIYRGLARAAGLSGEVEQQLFDALQRKAIDEVVALTADLPQELASMLRALVDLCGGREVLDAARDRLAGAPAPVLAALNDLLAIAERLAARFPQLPLYFDLGELRGYHYHTGVVFAVFVPGVGQSIAQGGRYDDIGADFGRARPATGFSTDLKTLVTLGQAEIVLPSGGIWVPDSTDAALWQQVCQLRSEGQRVVQALPGQQASAAREADCDRQLIQHGEHWQVMPLAS</sequence>
<dbReference type="EMBL" id="CP000058">
    <property type="protein sequence ID" value="AAZ36596.1"/>
    <property type="molecule type" value="Genomic_DNA"/>
</dbReference>
<dbReference type="RefSeq" id="WP_011167565.1">
    <property type="nucleotide sequence ID" value="NC_005773.3"/>
</dbReference>
<dbReference type="SMR" id="Q48NZ8"/>
<dbReference type="KEGG" id="psp:PSPPH_0569"/>
<dbReference type="eggNOG" id="COG3705">
    <property type="taxonomic scope" value="Bacteria"/>
</dbReference>
<dbReference type="HOGENOM" id="CLU_025113_0_1_6"/>
<dbReference type="UniPathway" id="UPA00031">
    <property type="reaction ID" value="UER00006"/>
</dbReference>
<dbReference type="Proteomes" id="UP000000551">
    <property type="component" value="Chromosome"/>
</dbReference>
<dbReference type="GO" id="GO:0005737">
    <property type="term" value="C:cytoplasm"/>
    <property type="evidence" value="ECO:0007669"/>
    <property type="project" value="UniProtKB-SubCell"/>
</dbReference>
<dbReference type="GO" id="GO:0000105">
    <property type="term" value="P:L-histidine biosynthetic process"/>
    <property type="evidence" value="ECO:0007669"/>
    <property type="project" value="UniProtKB-UniRule"/>
</dbReference>
<dbReference type="CDD" id="cd00773">
    <property type="entry name" value="HisRS-like_core"/>
    <property type="match status" value="1"/>
</dbReference>
<dbReference type="Gene3D" id="3.30.930.10">
    <property type="entry name" value="Bira Bifunctional Protein, Domain 2"/>
    <property type="match status" value="1"/>
</dbReference>
<dbReference type="HAMAP" id="MF_00125">
    <property type="entry name" value="HisZ"/>
    <property type="match status" value="1"/>
</dbReference>
<dbReference type="InterPro" id="IPR045864">
    <property type="entry name" value="aa-tRNA-synth_II/BPL/LPL"/>
</dbReference>
<dbReference type="InterPro" id="IPR041715">
    <property type="entry name" value="HisRS-like_core"/>
</dbReference>
<dbReference type="InterPro" id="IPR004516">
    <property type="entry name" value="HisRS/HisZ"/>
</dbReference>
<dbReference type="InterPro" id="IPR004517">
    <property type="entry name" value="HisZ"/>
</dbReference>
<dbReference type="NCBIfam" id="TIGR00443">
    <property type="entry name" value="hisZ_biosyn_reg"/>
    <property type="match status" value="1"/>
</dbReference>
<dbReference type="NCBIfam" id="NF008935">
    <property type="entry name" value="PRK12292.1-1"/>
    <property type="match status" value="1"/>
</dbReference>
<dbReference type="NCBIfam" id="NF008937">
    <property type="entry name" value="PRK12292.1-4"/>
    <property type="match status" value="1"/>
</dbReference>
<dbReference type="NCBIfam" id="NF009086">
    <property type="entry name" value="PRK12421.1"/>
    <property type="match status" value="1"/>
</dbReference>
<dbReference type="PANTHER" id="PTHR11476:SF7">
    <property type="entry name" value="HISTIDINE--TRNA LIGASE"/>
    <property type="match status" value="1"/>
</dbReference>
<dbReference type="PANTHER" id="PTHR11476">
    <property type="entry name" value="HISTIDYL-TRNA SYNTHETASE"/>
    <property type="match status" value="1"/>
</dbReference>
<dbReference type="Pfam" id="PF13393">
    <property type="entry name" value="tRNA-synt_His"/>
    <property type="match status" value="1"/>
</dbReference>
<dbReference type="PIRSF" id="PIRSF001549">
    <property type="entry name" value="His-tRNA_synth"/>
    <property type="match status" value="1"/>
</dbReference>
<dbReference type="SUPFAM" id="SSF55681">
    <property type="entry name" value="Class II aaRS and biotin synthetases"/>
    <property type="match status" value="1"/>
</dbReference>
<keyword id="KW-0028">Amino-acid biosynthesis</keyword>
<keyword id="KW-0963">Cytoplasm</keyword>
<keyword id="KW-0368">Histidine biosynthesis</keyword>
<proteinExistence type="inferred from homology"/>
<gene>
    <name evidence="1" type="primary">hisZ</name>
    <name type="ordered locus">PSPPH_0569</name>
</gene>